<evidence type="ECO:0000255" key="1">
    <source>
        <dbReference type="HAMAP-Rule" id="MF_00456"/>
    </source>
</evidence>
<evidence type="ECO:0000305" key="2"/>
<name>PROB_CLOPE</name>
<reference key="1">
    <citation type="journal article" date="2002" name="J. Bacteriol.">
        <title>Identification of the Clostridium perfringens genes involved in the adaptive response to oxidative stress.</title>
        <authorList>
            <person name="Briolat V."/>
            <person name="Reysset G."/>
        </authorList>
    </citation>
    <scope>NUCLEOTIDE SEQUENCE [GENOMIC DNA]</scope>
    <source>
        <strain>13 / Type A</strain>
    </source>
</reference>
<reference key="2">
    <citation type="journal article" date="2002" name="Proc. Natl. Acad. Sci. U.S.A.">
        <title>Complete genome sequence of Clostridium perfringens, an anaerobic flesh-eater.</title>
        <authorList>
            <person name="Shimizu T."/>
            <person name="Ohtani K."/>
            <person name="Hirakawa H."/>
            <person name="Ohshima K."/>
            <person name="Yamashita A."/>
            <person name="Shiba T."/>
            <person name="Ogasawara N."/>
            <person name="Hattori M."/>
            <person name="Kuhara S."/>
            <person name="Hayashi H."/>
        </authorList>
    </citation>
    <scope>NUCLEOTIDE SEQUENCE [LARGE SCALE GENOMIC DNA]</scope>
    <source>
        <strain>13 / Type A</strain>
    </source>
</reference>
<sequence length="269" mass="29214">MRKALKDSKRIVVKVGTSTLTYENGSVNLMRIEKLSRVISDICNMGKEVVLVSSGAIGVGVGKLRLEKKPETIREKQAVAAVGQCALMHIYNKFFGEYSHVVAQVLLTRDVLENERMKNNVCNTFDTLLEKGIIPIVNENDAISIDEIQNILNFGDNDNLSAIVSTLVNADTLIILSDIDGFYDSDPRTNEDSKMLKEVYEITPEIEECAGGAGSNRGTGGMVTKLSAAKVATSNGIDMILANGENPEILIDILNGEDIGTMFVAKKGE</sequence>
<dbReference type="EC" id="2.7.2.11" evidence="1"/>
<dbReference type="EMBL" id="AJ420783">
    <property type="protein sequence ID" value="CAD12651.1"/>
    <property type="status" value="ALT_FRAME"/>
    <property type="molecule type" value="Genomic_DNA"/>
</dbReference>
<dbReference type="EMBL" id="BA000016">
    <property type="protein sequence ID" value="BAB82285.1"/>
    <property type="molecule type" value="Genomic_DNA"/>
</dbReference>
<dbReference type="RefSeq" id="WP_003450599.1">
    <property type="nucleotide sequence ID" value="NC_003366.1"/>
</dbReference>
<dbReference type="SMR" id="Q8XHA6"/>
<dbReference type="STRING" id="195102.gene:10491913"/>
<dbReference type="GeneID" id="93000817"/>
<dbReference type="KEGG" id="cpe:CPE2579"/>
<dbReference type="HOGENOM" id="CLU_025400_0_2_9"/>
<dbReference type="UniPathway" id="UPA00098">
    <property type="reaction ID" value="UER00359"/>
</dbReference>
<dbReference type="Proteomes" id="UP000000818">
    <property type="component" value="Chromosome"/>
</dbReference>
<dbReference type="GO" id="GO:0005829">
    <property type="term" value="C:cytosol"/>
    <property type="evidence" value="ECO:0007669"/>
    <property type="project" value="TreeGrafter"/>
</dbReference>
<dbReference type="GO" id="GO:0005524">
    <property type="term" value="F:ATP binding"/>
    <property type="evidence" value="ECO:0007669"/>
    <property type="project" value="UniProtKB-KW"/>
</dbReference>
<dbReference type="GO" id="GO:0004349">
    <property type="term" value="F:glutamate 5-kinase activity"/>
    <property type="evidence" value="ECO:0007669"/>
    <property type="project" value="UniProtKB-UniRule"/>
</dbReference>
<dbReference type="GO" id="GO:0055129">
    <property type="term" value="P:L-proline biosynthetic process"/>
    <property type="evidence" value="ECO:0007669"/>
    <property type="project" value="UniProtKB-UniRule"/>
</dbReference>
<dbReference type="CDD" id="cd04242">
    <property type="entry name" value="AAK_G5K_ProB"/>
    <property type="match status" value="1"/>
</dbReference>
<dbReference type="FunFam" id="3.40.1160.10:FF:000018">
    <property type="entry name" value="Glutamate 5-kinase"/>
    <property type="match status" value="1"/>
</dbReference>
<dbReference type="Gene3D" id="3.40.1160.10">
    <property type="entry name" value="Acetylglutamate kinase-like"/>
    <property type="match status" value="1"/>
</dbReference>
<dbReference type="HAMAP" id="MF_00456">
    <property type="entry name" value="ProB"/>
    <property type="match status" value="1"/>
</dbReference>
<dbReference type="InterPro" id="IPR036393">
    <property type="entry name" value="AceGlu_kinase-like_sf"/>
</dbReference>
<dbReference type="InterPro" id="IPR001048">
    <property type="entry name" value="Asp/Glu/Uridylate_kinase"/>
</dbReference>
<dbReference type="InterPro" id="IPR041739">
    <property type="entry name" value="G5K_ProB"/>
</dbReference>
<dbReference type="InterPro" id="IPR001057">
    <property type="entry name" value="Glu/AcGlu_kinase"/>
</dbReference>
<dbReference type="InterPro" id="IPR011529">
    <property type="entry name" value="Glu_5kinase"/>
</dbReference>
<dbReference type="InterPro" id="IPR005715">
    <property type="entry name" value="Glu_5kinase/COase_Synthase"/>
</dbReference>
<dbReference type="InterPro" id="IPR019797">
    <property type="entry name" value="Glutamate_5-kinase_CS"/>
</dbReference>
<dbReference type="NCBIfam" id="TIGR01027">
    <property type="entry name" value="proB"/>
    <property type="match status" value="1"/>
</dbReference>
<dbReference type="PANTHER" id="PTHR43654">
    <property type="entry name" value="GLUTAMATE 5-KINASE"/>
    <property type="match status" value="1"/>
</dbReference>
<dbReference type="PANTHER" id="PTHR43654:SF1">
    <property type="entry name" value="ISOPENTENYL PHOSPHATE KINASE"/>
    <property type="match status" value="1"/>
</dbReference>
<dbReference type="Pfam" id="PF00696">
    <property type="entry name" value="AA_kinase"/>
    <property type="match status" value="1"/>
</dbReference>
<dbReference type="PIRSF" id="PIRSF000729">
    <property type="entry name" value="GK"/>
    <property type="match status" value="1"/>
</dbReference>
<dbReference type="PRINTS" id="PR00474">
    <property type="entry name" value="GLU5KINASE"/>
</dbReference>
<dbReference type="SUPFAM" id="SSF53633">
    <property type="entry name" value="Carbamate kinase-like"/>
    <property type="match status" value="1"/>
</dbReference>
<dbReference type="PROSITE" id="PS00902">
    <property type="entry name" value="GLUTAMATE_5_KINASE"/>
    <property type="match status" value="1"/>
</dbReference>
<keyword id="KW-0028">Amino-acid biosynthesis</keyword>
<keyword id="KW-0067">ATP-binding</keyword>
<keyword id="KW-0963">Cytoplasm</keyword>
<keyword id="KW-0418">Kinase</keyword>
<keyword id="KW-0547">Nucleotide-binding</keyword>
<keyword id="KW-0641">Proline biosynthesis</keyword>
<keyword id="KW-1185">Reference proteome</keyword>
<keyword id="KW-0808">Transferase</keyword>
<organism>
    <name type="scientific">Clostridium perfringens (strain 13 / Type A)</name>
    <dbReference type="NCBI Taxonomy" id="195102"/>
    <lineage>
        <taxon>Bacteria</taxon>
        <taxon>Bacillati</taxon>
        <taxon>Bacillota</taxon>
        <taxon>Clostridia</taxon>
        <taxon>Eubacteriales</taxon>
        <taxon>Clostridiaceae</taxon>
        <taxon>Clostridium</taxon>
    </lineage>
</organism>
<feature type="chain" id="PRO_0000109661" description="Glutamate 5-kinase">
    <location>
        <begin position="1"/>
        <end position="269"/>
    </location>
</feature>
<feature type="binding site" evidence="1">
    <location>
        <position position="14"/>
    </location>
    <ligand>
        <name>ATP</name>
        <dbReference type="ChEBI" id="CHEBI:30616"/>
    </ligand>
</feature>
<feature type="binding site" evidence="1">
    <location>
        <position position="54"/>
    </location>
    <ligand>
        <name>substrate</name>
    </ligand>
</feature>
<feature type="binding site" evidence="1">
    <location>
        <position position="141"/>
    </location>
    <ligand>
        <name>substrate</name>
    </ligand>
</feature>
<feature type="binding site" evidence="1">
    <location>
        <position position="157"/>
    </location>
    <ligand>
        <name>substrate</name>
    </ligand>
</feature>
<feature type="binding site" evidence="1">
    <location>
        <begin position="177"/>
        <end position="178"/>
    </location>
    <ligand>
        <name>ATP</name>
        <dbReference type="ChEBI" id="CHEBI:30616"/>
    </ligand>
</feature>
<feature type="binding site" evidence="1">
    <location>
        <begin position="219"/>
        <end position="225"/>
    </location>
    <ligand>
        <name>ATP</name>
        <dbReference type="ChEBI" id="CHEBI:30616"/>
    </ligand>
</feature>
<comment type="function">
    <text evidence="1">Catalyzes the transfer of a phosphate group to glutamate to form L-glutamate 5-phosphate.</text>
</comment>
<comment type="catalytic activity">
    <reaction evidence="1">
        <text>L-glutamate + ATP = L-glutamyl 5-phosphate + ADP</text>
        <dbReference type="Rhea" id="RHEA:14877"/>
        <dbReference type="ChEBI" id="CHEBI:29985"/>
        <dbReference type="ChEBI" id="CHEBI:30616"/>
        <dbReference type="ChEBI" id="CHEBI:58274"/>
        <dbReference type="ChEBI" id="CHEBI:456216"/>
        <dbReference type="EC" id="2.7.2.11"/>
    </reaction>
</comment>
<comment type="pathway">
    <text evidence="1">Amino-acid biosynthesis; L-proline biosynthesis; L-glutamate 5-semialdehyde from L-glutamate: step 1/2.</text>
</comment>
<comment type="subcellular location">
    <subcellularLocation>
        <location evidence="1">Cytoplasm</location>
    </subcellularLocation>
</comment>
<comment type="similarity">
    <text evidence="1">Belongs to the glutamate 5-kinase family.</text>
</comment>
<comment type="sequence caution" evidence="2">
    <conflict type="frameshift">
        <sequence resource="EMBL-CDS" id="CAD12651"/>
    </conflict>
</comment>
<proteinExistence type="inferred from homology"/>
<protein>
    <recommendedName>
        <fullName evidence="1">Glutamate 5-kinase</fullName>
        <ecNumber evidence="1">2.7.2.11</ecNumber>
    </recommendedName>
    <alternativeName>
        <fullName evidence="1">Gamma-glutamyl kinase</fullName>
        <shortName evidence="1">GK</shortName>
    </alternativeName>
</protein>
<gene>
    <name evidence="1" type="primary">proB</name>
    <name type="ordered locus">CPE2579</name>
</gene>
<accession>Q8XHA6</accession>
<accession>Q8VNV7</accession>